<gene>
    <name type="ordered locus">Os09g0362500</name>
    <name type="ordered locus">LOC_Os09g19790</name>
    <name type="ORF">OJ1506_A04.10</name>
</gene>
<accession>Q0J2B5</accession>
<accession>Q6K4E8</accession>
<feature type="chain" id="PRO_0000424586" description="Aminopeptidase M1-C">
    <location>
        <begin position="1"/>
        <end position="878"/>
    </location>
</feature>
<feature type="region of interest" description="Required for membrane association" evidence="1">
    <location>
        <begin position="102"/>
        <end position="209"/>
    </location>
</feature>
<feature type="short sequence motif" description="Dileucine internalization motif" evidence="2">
    <location>
        <begin position="726"/>
        <end position="727"/>
    </location>
</feature>
<feature type="active site" description="Proton acceptor" evidence="3">
    <location>
        <position position="312"/>
    </location>
</feature>
<feature type="binding site" evidence="1">
    <location>
        <position position="142"/>
    </location>
    <ligand>
        <name>substrate</name>
    </ligand>
</feature>
<feature type="binding site" evidence="1">
    <location>
        <begin position="275"/>
        <end position="279"/>
    </location>
    <ligand>
        <name>substrate</name>
    </ligand>
</feature>
<feature type="binding site" evidence="3">
    <location>
        <position position="311"/>
    </location>
    <ligand>
        <name>Zn(2+)</name>
        <dbReference type="ChEBI" id="CHEBI:29105"/>
        <note>catalytic</note>
    </ligand>
</feature>
<feature type="binding site" evidence="3">
    <location>
        <position position="315"/>
    </location>
    <ligand>
        <name>Zn(2+)</name>
        <dbReference type="ChEBI" id="CHEBI:29105"/>
        <note>catalytic</note>
    </ligand>
</feature>
<feature type="binding site" evidence="3">
    <location>
        <position position="334"/>
    </location>
    <ligand>
        <name>Zn(2+)</name>
        <dbReference type="ChEBI" id="CHEBI:29105"/>
        <note>catalytic</note>
    </ligand>
</feature>
<feature type="site" description="Transition state stabilizer" evidence="1">
    <location>
        <position position="396"/>
    </location>
</feature>
<feature type="sequence conflict" description="In Ref. 4; AK068165." evidence="4" ref="4">
    <original>N</original>
    <variation>D</variation>
    <location>
        <position position="304"/>
    </location>
</feature>
<evidence type="ECO:0000250" key="1"/>
<evidence type="ECO:0000255" key="2"/>
<evidence type="ECO:0000255" key="3">
    <source>
        <dbReference type="PROSITE-ProRule" id="PRU10095"/>
    </source>
</evidence>
<evidence type="ECO:0000305" key="4"/>
<comment type="catalytic activity">
    <reaction>
        <text>Release of an N-terminal amino acid, Xaa-|-Yaa- from a peptide, amide or arylamide. Xaa is preferably Ala, but may be most amino acids including Pro (slow action). When a terminal hydrophobic residue is followed by a prolyl residue, the two may be released as an intact Xaa-Pro dipeptide.</text>
        <dbReference type="EC" id="3.4.11.2"/>
    </reaction>
</comment>
<comment type="cofactor">
    <cofactor evidence="1">
        <name>Zn(2+)</name>
        <dbReference type="ChEBI" id="CHEBI:29105"/>
    </cofactor>
    <text evidence="1">Binds 1 zinc ion per subunit.</text>
</comment>
<comment type="subunit">
    <text evidence="1">Homodimer.</text>
</comment>
<comment type="subcellular location">
    <subcellularLocation>
        <location evidence="1">Membrane</location>
        <topology evidence="1">Peripheral membrane protein</topology>
    </subcellularLocation>
    <subcellularLocation>
        <location evidence="1">Microsome membrane</location>
        <topology evidence="1">Peripheral membrane protein</topology>
    </subcellularLocation>
    <subcellularLocation>
        <location evidence="1">Cytoplasm</location>
    </subcellularLocation>
    <text>The dileucine internalization motif may be involved in intracellular sequestration.</text>
</comment>
<comment type="domain">
    <text evidence="1">Dileucine motif seems to be involved in protein-protein interactions.</text>
</comment>
<comment type="similarity">
    <text evidence="4">Belongs to the peptidase M1 family.</text>
</comment>
<comment type="sequence caution" evidence="4">
    <conflict type="erroneous gene model prediction">
        <sequence resource="EMBL-CDS" id="BAD23405"/>
    </conflict>
</comment>
<protein>
    <recommendedName>
        <fullName>Aminopeptidase M1-C</fullName>
        <ecNumber>3.4.11.2</ecNumber>
    </recommendedName>
    <alternativeName>
        <fullName>Alpha-aminoacylpeptide hydrolase</fullName>
    </alternativeName>
</protein>
<dbReference type="EC" id="3.4.11.2"/>
<dbReference type="EMBL" id="AP005572">
    <property type="protein sequence ID" value="BAD23405.1"/>
    <property type="status" value="ALT_SEQ"/>
    <property type="molecule type" value="Genomic_DNA"/>
</dbReference>
<dbReference type="EMBL" id="AP008215">
    <property type="protein sequence ID" value="BAF24900.2"/>
    <property type="molecule type" value="Genomic_DNA"/>
</dbReference>
<dbReference type="EMBL" id="AP014965">
    <property type="status" value="NOT_ANNOTATED_CDS"/>
    <property type="molecule type" value="Genomic_DNA"/>
</dbReference>
<dbReference type="EMBL" id="AK068165">
    <property type="status" value="NOT_ANNOTATED_CDS"/>
    <property type="molecule type" value="mRNA"/>
</dbReference>
<dbReference type="RefSeq" id="XP_015612451.1">
    <property type="nucleotide sequence ID" value="XM_015756965.1"/>
</dbReference>
<dbReference type="SMR" id="Q0J2B5"/>
<dbReference type="FunCoup" id="Q0J2B5">
    <property type="interactions" value="1803"/>
</dbReference>
<dbReference type="STRING" id="39947.Q0J2B5"/>
<dbReference type="MEROPS" id="M01.A25"/>
<dbReference type="PaxDb" id="39947-Q0J2B5"/>
<dbReference type="KEGG" id="dosa:Os09g0362500"/>
<dbReference type="eggNOG" id="KOG1046">
    <property type="taxonomic scope" value="Eukaryota"/>
</dbReference>
<dbReference type="HOGENOM" id="CLU_003705_0_1_1"/>
<dbReference type="InParanoid" id="Q0J2B5"/>
<dbReference type="OrthoDB" id="10031169at2759"/>
<dbReference type="Proteomes" id="UP000000763">
    <property type="component" value="Chromosome 9"/>
</dbReference>
<dbReference type="Proteomes" id="UP000059680">
    <property type="component" value="Chromosome 9"/>
</dbReference>
<dbReference type="GO" id="GO:0005737">
    <property type="term" value="C:cytoplasm"/>
    <property type="evidence" value="ECO:0000318"/>
    <property type="project" value="GO_Central"/>
</dbReference>
<dbReference type="GO" id="GO:0005783">
    <property type="term" value="C:endoplasmic reticulum"/>
    <property type="evidence" value="ECO:0007669"/>
    <property type="project" value="UniProtKB-KW"/>
</dbReference>
<dbReference type="GO" id="GO:0005615">
    <property type="term" value="C:extracellular space"/>
    <property type="evidence" value="ECO:0000318"/>
    <property type="project" value="GO_Central"/>
</dbReference>
<dbReference type="GO" id="GO:0016020">
    <property type="term" value="C:membrane"/>
    <property type="evidence" value="ECO:0000318"/>
    <property type="project" value="GO_Central"/>
</dbReference>
<dbReference type="GO" id="GO:0016285">
    <property type="term" value="F:alanyl aminopeptidase activity"/>
    <property type="evidence" value="ECO:0007669"/>
    <property type="project" value="UniProtKB-EC"/>
</dbReference>
<dbReference type="GO" id="GO:0070006">
    <property type="term" value="F:metalloaminopeptidase activity"/>
    <property type="evidence" value="ECO:0000318"/>
    <property type="project" value="GO_Central"/>
</dbReference>
<dbReference type="GO" id="GO:0042277">
    <property type="term" value="F:peptide binding"/>
    <property type="evidence" value="ECO:0000318"/>
    <property type="project" value="GO_Central"/>
</dbReference>
<dbReference type="GO" id="GO:0008270">
    <property type="term" value="F:zinc ion binding"/>
    <property type="evidence" value="ECO:0000318"/>
    <property type="project" value="GO_Central"/>
</dbReference>
<dbReference type="GO" id="GO:0043171">
    <property type="term" value="P:peptide catabolic process"/>
    <property type="evidence" value="ECO:0000318"/>
    <property type="project" value="GO_Central"/>
</dbReference>
<dbReference type="GO" id="GO:0006508">
    <property type="term" value="P:proteolysis"/>
    <property type="evidence" value="ECO:0000318"/>
    <property type="project" value="GO_Central"/>
</dbReference>
<dbReference type="CDD" id="cd09601">
    <property type="entry name" value="M1_APN-Q_like"/>
    <property type="match status" value="1"/>
</dbReference>
<dbReference type="FunFam" id="1.10.390.10:FF:000001">
    <property type="entry name" value="Aminopeptidase"/>
    <property type="match status" value="1"/>
</dbReference>
<dbReference type="FunFam" id="1.25.50.20:FF:000002">
    <property type="entry name" value="Aminopeptidase"/>
    <property type="match status" value="1"/>
</dbReference>
<dbReference type="FunFam" id="2.60.40.1730:FF:000009">
    <property type="entry name" value="Aminopeptidase"/>
    <property type="match status" value="1"/>
</dbReference>
<dbReference type="FunFam" id="2.60.40.1910:FF:000007">
    <property type="entry name" value="Aminopeptidase"/>
    <property type="match status" value="1"/>
</dbReference>
<dbReference type="Gene3D" id="1.25.50.20">
    <property type="match status" value="1"/>
</dbReference>
<dbReference type="Gene3D" id="2.60.40.1910">
    <property type="match status" value="1"/>
</dbReference>
<dbReference type="Gene3D" id="1.10.390.10">
    <property type="entry name" value="Neutral Protease Domain 2"/>
    <property type="match status" value="1"/>
</dbReference>
<dbReference type="Gene3D" id="2.60.40.1730">
    <property type="entry name" value="tricorn interacting facor f3 domain"/>
    <property type="match status" value="1"/>
</dbReference>
<dbReference type="InterPro" id="IPR045357">
    <property type="entry name" value="Aminopeptidase_N-like_N"/>
</dbReference>
<dbReference type="InterPro" id="IPR042097">
    <property type="entry name" value="Aminopeptidase_N-like_N_sf"/>
</dbReference>
<dbReference type="InterPro" id="IPR024571">
    <property type="entry name" value="ERAP1-like_C_dom"/>
</dbReference>
<dbReference type="InterPro" id="IPR034016">
    <property type="entry name" value="M1_APN-typ"/>
</dbReference>
<dbReference type="InterPro" id="IPR001930">
    <property type="entry name" value="Peptidase_M1"/>
</dbReference>
<dbReference type="InterPro" id="IPR050344">
    <property type="entry name" value="Peptidase_M1_aminopeptidases"/>
</dbReference>
<dbReference type="InterPro" id="IPR014782">
    <property type="entry name" value="Peptidase_M1_dom"/>
</dbReference>
<dbReference type="InterPro" id="IPR027268">
    <property type="entry name" value="Peptidase_M4/M1_CTD_sf"/>
</dbReference>
<dbReference type="PANTHER" id="PTHR11533:SF203">
    <property type="entry name" value="AMINOPEPTIDASE M1-C"/>
    <property type="match status" value="1"/>
</dbReference>
<dbReference type="PANTHER" id="PTHR11533">
    <property type="entry name" value="PROTEASE M1 ZINC METALLOPROTEASE"/>
    <property type="match status" value="1"/>
</dbReference>
<dbReference type="Pfam" id="PF11838">
    <property type="entry name" value="ERAP1_C"/>
    <property type="match status" value="1"/>
</dbReference>
<dbReference type="Pfam" id="PF01433">
    <property type="entry name" value="Peptidase_M1"/>
    <property type="match status" value="1"/>
</dbReference>
<dbReference type="Pfam" id="PF17900">
    <property type="entry name" value="Peptidase_M1_N"/>
    <property type="match status" value="1"/>
</dbReference>
<dbReference type="PRINTS" id="PR00756">
    <property type="entry name" value="ALADIPTASE"/>
</dbReference>
<dbReference type="SUPFAM" id="SSF63737">
    <property type="entry name" value="Leukotriene A4 hydrolase N-terminal domain"/>
    <property type="match status" value="1"/>
</dbReference>
<dbReference type="SUPFAM" id="SSF55486">
    <property type="entry name" value="Metalloproteases ('zincins'), catalytic domain"/>
    <property type="match status" value="1"/>
</dbReference>
<dbReference type="PROSITE" id="PS00142">
    <property type="entry name" value="ZINC_PROTEASE"/>
    <property type="match status" value="1"/>
</dbReference>
<reference key="1">
    <citation type="journal article" date="2005" name="Nature">
        <title>The map-based sequence of the rice genome.</title>
        <authorList>
            <consortium name="International rice genome sequencing project (IRGSP)"/>
        </authorList>
    </citation>
    <scope>NUCLEOTIDE SEQUENCE [LARGE SCALE GENOMIC DNA]</scope>
    <source>
        <strain>cv. Nipponbare</strain>
    </source>
</reference>
<reference key="2">
    <citation type="journal article" date="2008" name="Nucleic Acids Res.">
        <title>The rice annotation project database (RAP-DB): 2008 update.</title>
        <authorList>
            <consortium name="The rice annotation project (RAP)"/>
        </authorList>
    </citation>
    <scope>GENOME REANNOTATION</scope>
    <source>
        <strain>cv. Nipponbare</strain>
    </source>
</reference>
<reference key="3">
    <citation type="journal article" date="2013" name="Rice">
        <title>Improvement of the Oryza sativa Nipponbare reference genome using next generation sequence and optical map data.</title>
        <authorList>
            <person name="Kawahara Y."/>
            <person name="de la Bastide M."/>
            <person name="Hamilton J.P."/>
            <person name="Kanamori H."/>
            <person name="McCombie W.R."/>
            <person name="Ouyang S."/>
            <person name="Schwartz D.C."/>
            <person name="Tanaka T."/>
            <person name="Wu J."/>
            <person name="Zhou S."/>
            <person name="Childs K.L."/>
            <person name="Davidson R.M."/>
            <person name="Lin H."/>
            <person name="Quesada-Ocampo L."/>
            <person name="Vaillancourt B."/>
            <person name="Sakai H."/>
            <person name="Lee S.S."/>
            <person name="Kim J."/>
            <person name="Numa H."/>
            <person name="Itoh T."/>
            <person name="Buell C.R."/>
            <person name="Matsumoto T."/>
        </authorList>
    </citation>
    <scope>GENOME REANNOTATION</scope>
    <source>
        <strain>cv. Nipponbare</strain>
    </source>
</reference>
<reference key="4">
    <citation type="journal article" date="2003" name="Science">
        <title>Collection, mapping, and annotation of over 28,000 cDNA clones from japonica rice.</title>
        <authorList>
            <consortium name="The rice full-length cDNA consortium"/>
        </authorList>
    </citation>
    <scope>NUCLEOTIDE SEQUENCE [LARGE SCALE MRNA] OF 9-878</scope>
    <source>
        <strain>cv. Nipponbare</strain>
    </source>
</reference>
<organism>
    <name type="scientific">Oryza sativa subsp. japonica</name>
    <name type="common">Rice</name>
    <dbReference type="NCBI Taxonomy" id="39947"/>
    <lineage>
        <taxon>Eukaryota</taxon>
        <taxon>Viridiplantae</taxon>
        <taxon>Streptophyta</taxon>
        <taxon>Embryophyta</taxon>
        <taxon>Tracheophyta</taxon>
        <taxon>Spermatophyta</taxon>
        <taxon>Magnoliopsida</taxon>
        <taxon>Liliopsida</taxon>
        <taxon>Poales</taxon>
        <taxon>Poaceae</taxon>
        <taxon>BOP clade</taxon>
        <taxon>Oryzoideae</taxon>
        <taxon>Oryzeae</taxon>
        <taxon>Oryzinae</taxon>
        <taxon>Oryza</taxon>
        <taxon>Oryza sativa</taxon>
    </lineage>
</organism>
<sequence>MAPAPAPAGSADQFRGQARLPRFAAPRRYELRLRPDLDACVFTGDASVVVDVSAPTRFLVLNAADLAVDRASIRFQGLAPTEVSLFEDDEILVLEFDGELPLGEGVLAMDFNGTLNDQMRGFYRSKYEYKGETKNMAVTQFEAVDARRCFPCWDEPAFKAKFKLTLEVPSELVALSNMPVACETIAGPIKTIHYEESPLMSTYLVAIVVGLFDYVEGVTSEGNKVRVYTQVGKSSQGKFALDIGVKSLNFYKDYFDTPYPLPKLDMVAIPDFAAGAMENYGLVTYREVSLLFDEQSSSASFKQNVAITVAHELAHQWFGNLVTMEWWTHLWLNEGFATWMSHLSVDSFFPQWNIWTQFLDSTTSALKLDSQAESHPIEVEIHHASEVDEIFDAISYDKGASVIRMLQSYLGAERFQKALTSYIKKYAYSNAKTEDLWAVLEEVSGEPVKDLMTTWTKQQGYPVISVKLKGHDLELEQDQFLLNGTSGAGIWIVPITLGCCSHDKQKRLLLKHKHDNIKAIVSQCDSRQKGGNFWIKLNIDETGFYRVKYDDELTAALRNALQAKKLSLMDEIGIVDDAHALSIACKQTLSSLLHLLYAFRDEADYSVLSHINSVTSSVAKISIDATPDLAGDIKQLFIKLLLPPAKKLGWDPKDGESHLNAMLRPMLLVALVQLGHDKTINEGFRRFQIFFDDRNTSLLTPDTRKAAYLSVMHNVSSTNRSGYDALLKVYRKSAEGEEKLRVLGTLSSCQDKDIVLESLNLIFTDEVRNQDAYRVLGGVIIEARETAWSWLKENWDRISEAFSGSSLISDFIRSIVTLFTSKEKEAEISQFFATRTKPGYERTLKQSLERVLINARWIEGIRGEAKLAQTVHELLHKP</sequence>
<keyword id="KW-0031">Aminopeptidase</keyword>
<keyword id="KW-0963">Cytoplasm</keyword>
<keyword id="KW-0256">Endoplasmic reticulum</keyword>
<keyword id="KW-0378">Hydrolase</keyword>
<keyword id="KW-0472">Membrane</keyword>
<keyword id="KW-0479">Metal-binding</keyword>
<keyword id="KW-0482">Metalloprotease</keyword>
<keyword id="KW-0492">Microsome</keyword>
<keyword id="KW-0645">Protease</keyword>
<keyword id="KW-1185">Reference proteome</keyword>
<keyword id="KW-0862">Zinc</keyword>
<proteinExistence type="evidence at transcript level"/>
<name>APM1C_ORYSJ</name>